<comment type="catalytic activity">
    <reaction evidence="1">
        <text>L-citrulline + L-aspartate + ATP = 2-(N(omega)-L-arginino)succinate + AMP + diphosphate + H(+)</text>
        <dbReference type="Rhea" id="RHEA:10932"/>
        <dbReference type="ChEBI" id="CHEBI:15378"/>
        <dbReference type="ChEBI" id="CHEBI:29991"/>
        <dbReference type="ChEBI" id="CHEBI:30616"/>
        <dbReference type="ChEBI" id="CHEBI:33019"/>
        <dbReference type="ChEBI" id="CHEBI:57472"/>
        <dbReference type="ChEBI" id="CHEBI:57743"/>
        <dbReference type="ChEBI" id="CHEBI:456215"/>
        <dbReference type="EC" id="6.3.4.5"/>
    </reaction>
</comment>
<comment type="pathway">
    <text evidence="1">Amino-acid biosynthesis; L-arginine biosynthesis; L-arginine from L-ornithine and carbamoyl phosphate: step 2/3.</text>
</comment>
<comment type="subunit">
    <text evidence="1">Homotetramer.</text>
</comment>
<comment type="subcellular location">
    <subcellularLocation>
        <location evidence="1">Cytoplasm</location>
    </subcellularLocation>
</comment>
<comment type="similarity">
    <text evidence="1">Belongs to the argininosuccinate synthase family. Type 1 subfamily.</text>
</comment>
<feature type="chain" id="PRO_1000000380" description="Argininosuccinate synthase">
    <location>
        <begin position="1"/>
        <end position="401"/>
    </location>
</feature>
<feature type="binding site" evidence="1">
    <location>
        <begin position="8"/>
        <end position="16"/>
    </location>
    <ligand>
        <name>ATP</name>
        <dbReference type="ChEBI" id="CHEBI:30616"/>
    </ligand>
</feature>
<feature type="binding site" evidence="1">
    <location>
        <position position="87"/>
    </location>
    <ligand>
        <name>L-citrulline</name>
        <dbReference type="ChEBI" id="CHEBI:57743"/>
    </ligand>
</feature>
<feature type="binding site" evidence="1">
    <location>
        <position position="117"/>
    </location>
    <ligand>
        <name>ATP</name>
        <dbReference type="ChEBI" id="CHEBI:30616"/>
    </ligand>
</feature>
<feature type="binding site" evidence="1">
    <location>
        <position position="119"/>
    </location>
    <ligand>
        <name>L-aspartate</name>
        <dbReference type="ChEBI" id="CHEBI:29991"/>
    </ligand>
</feature>
<feature type="binding site" evidence="1">
    <location>
        <position position="123"/>
    </location>
    <ligand>
        <name>L-aspartate</name>
        <dbReference type="ChEBI" id="CHEBI:29991"/>
    </ligand>
</feature>
<feature type="binding site" evidence="1">
    <location>
        <position position="123"/>
    </location>
    <ligand>
        <name>L-citrulline</name>
        <dbReference type="ChEBI" id="CHEBI:57743"/>
    </ligand>
</feature>
<feature type="binding site" evidence="1">
    <location>
        <position position="124"/>
    </location>
    <ligand>
        <name>L-aspartate</name>
        <dbReference type="ChEBI" id="CHEBI:29991"/>
    </ligand>
</feature>
<feature type="binding site" evidence="1">
    <location>
        <position position="127"/>
    </location>
    <ligand>
        <name>L-citrulline</name>
        <dbReference type="ChEBI" id="CHEBI:57743"/>
    </ligand>
</feature>
<feature type="binding site" evidence="1">
    <location>
        <position position="175"/>
    </location>
    <ligand>
        <name>L-citrulline</name>
        <dbReference type="ChEBI" id="CHEBI:57743"/>
    </ligand>
</feature>
<feature type="binding site" evidence="1">
    <location>
        <position position="259"/>
    </location>
    <ligand>
        <name>L-citrulline</name>
        <dbReference type="ChEBI" id="CHEBI:57743"/>
    </ligand>
</feature>
<feature type="binding site" evidence="1">
    <location>
        <position position="271"/>
    </location>
    <ligand>
        <name>L-citrulline</name>
        <dbReference type="ChEBI" id="CHEBI:57743"/>
    </ligand>
</feature>
<gene>
    <name evidence="1" type="primary">argG</name>
    <name type="ordered locus">Arth_1502</name>
</gene>
<reference key="1">
    <citation type="journal article" date="2013" name="Stand. Genomic Sci.">
        <title>Complete genome sequence of Arthrobacter sp. strain FB24.</title>
        <authorList>
            <person name="Nakatsu C.H."/>
            <person name="Barabote R."/>
            <person name="Thompson S."/>
            <person name="Bruce D."/>
            <person name="Detter C."/>
            <person name="Brettin T."/>
            <person name="Han C."/>
            <person name="Beasley F."/>
            <person name="Chen W."/>
            <person name="Konopka A."/>
            <person name="Xie G."/>
        </authorList>
    </citation>
    <scope>NUCLEOTIDE SEQUENCE [LARGE SCALE GENOMIC DNA]</scope>
    <source>
        <strain>FB24</strain>
    </source>
</reference>
<keyword id="KW-0028">Amino-acid biosynthesis</keyword>
<keyword id="KW-0055">Arginine biosynthesis</keyword>
<keyword id="KW-0067">ATP-binding</keyword>
<keyword id="KW-0963">Cytoplasm</keyword>
<keyword id="KW-0436">Ligase</keyword>
<keyword id="KW-0547">Nucleotide-binding</keyword>
<keyword id="KW-1185">Reference proteome</keyword>
<sequence length="401" mass="43633">MTERIVLAYSGGLDTSVAIGWIGEATGAEVIAVAVDVGQGGESLETIRQRALGCGAVEAYVADASDEFANEYCMPTLKANALYQGHYPLVSAISRPVIVKHLVKAAREFGATTVAHGCTGKGNDQVRFEVGIQTLGPDLKCIAPVRDLALTRDKAIAFAEEKGLPIETTKKNPYSIDQNVWGRAVETGYLEDIWNAPTKDIYDYTATPEFPPAPDEVIISFEAGVPVAIDGVRVTPLQAIKELNRRAGAQGVGRIDVVEDRLVGIKSREIYEAPGAMALITAHKHLEDITVEREQARFKATVGQRWSELVYDGQWFSPLKRSLDAFIEDTQKYVSGDIRMTLHGGQAVVNGRRSETSLYDFDLATYDTGDTFDQSMARGFIELWGMSAKVASGRDIRVAGK</sequence>
<protein>
    <recommendedName>
        <fullName evidence="1">Argininosuccinate synthase</fullName>
        <ecNumber evidence="1">6.3.4.5</ecNumber>
    </recommendedName>
    <alternativeName>
        <fullName evidence="1">Citrulline--aspartate ligase</fullName>
    </alternativeName>
</protein>
<accession>A0JV26</accession>
<dbReference type="EC" id="6.3.4.5" evidence="1"/>
<dbReference type="EMBL" id="CP000454">
    <property type="protein sequence ID" value="ABK02896.1"/>
    <property type="molecule type" value="Genomic_DNA"/>
</dbReference>
<dbReference type="RefSeq" id="WP_011691362.1">
    <property type="nucleotide sequence ID" value="NC_008541.1"/>
</dbReference>
<dbReference type="SMR" id="A0JV26"/>
<dbReference type="STRING" id="290399.Arth_1502"/>
<dbReference type="KEGG" id="art:Arth_1502"/>
<dbReference type="eggNOG" id="COG0137">
    <property type="taxonomic scope" value="Bacteria"/>
</dbReference>
<dbReference type="HOGENOM" id="CLU_032784_4_2_11"/>
<dbReference type="OrthoDB" id="9801641at2"/>
<dbReference type="UniPathway" id="UPA00068">
    <property type="reaction ID" value="UER00113"/>
</dbReference>
<dbReference type="Proteomes" id="UP000000754">
    <property type="component" value="Chromosome"/>
</dbReference>
<dbReference type="GO" id="GO:0005737">
    <property type="term" value="C:cytoplasm"/>
    <property type="evidence" value="ECO:0007669"/>
    <property type="project" value="UniProtKB-SubCell"/>
</dbReference>
<dbReference type="GO" id="GO:0004055">
    <property type="term" value="F:argininosuccinate synthase activity"/>
    <property type="evidence" value="ECO:0007669"/>
    <property type="project" value="UniProtKB-UniRule"/>
</dbReference>
<dbReference type="GO" id="GO:0005524">
    <property type="term" value="F:ATP binding"/>
    <property type="evidence" value="ECO:0007669"/>
    <property type="project" value="UniProtKB-UniRule"/>
</dbReference>
<dbReference type="GO" id="GO:0000053">
    <property type="term" value="P:argininosuccinate metabolic process"/>
    <property type="evidence" value="ECO:0007669"/>
    <property type="project" value="TreeGrafter"/>
</dbReference>
<dbReference type="GO" id="GO:0006526">
    <property type="term" value="P:L-arginine biosynthetic process"/>
    <property type="evidence" value="ECO:0007669"/>
    <property type="project" value="UniProtKB-UniRule"/>
</dbReference>
<dbReference type="GO" id="GO:0000050">
    <property type="term" value="P:urea cycle"/>
    <property type="evidence" value="ECO:0007669"/>
    <property type="project" value="TreeGrafter"/>
</dbReference>
<dbReference type="CDD" id="cd01999">
    <property type="entry name" value="ASS"/>
    <property type="match status" value="1"/>
</dbReference>
<dbReference type="FunFam" id="3.40.50.620:FF:000038">
    <property type="entry name" value="Argininosuccinate synthase"/>
    <property type="match status" value="1"/>
</dbReference>
<dbReference type="FunFam" id="3.90.1260.10:FF:000007">
    <property type="entry name" value="Argininosuccinate synthase"/>
    <property type="match status" value="1"/>
</dbReference>
<dbReference type="Gene3D" id="3.90.1260.10">
    <property type="entry name" value="Argininosuccinate synthetase, chain A, domain 2"/>
    <property type="match status" value="1"/>
</dbReference>
<dbReference type="Gene3D" id="3.40.50.620">
    <property type="entry name" value="HUPs"/>
    <property type="match status" value="1"/>
</dbReference>
<dbReference type="Gene3D" id="1.20.5.470">
    <property type="entry name" value="Single helix bin"/>
    <property type="match status" value="1"/>
</dbReference>
<dbReference type="HAMAP" id="MF_00005">
    <property type="entry name" value="Arg_succ_synth_type1"/>
    <property type="match status" value="1"/>
</dbReference>
<dbReference type="InterPro" id="IPR048268">
    <property type="entry name" value="Arginosuc_syn_C"/>
</dbReference>
<dbReference type="InterPro" id="IPR048267">
    <property type="entry name" value="Arginosuc_syn_N"/>
</dbReference>
<dbReference type="InterPro" id="IPR001518">
    <property type="entry name" value="Arginosuc_synth"/>
</dbReference>
<dbReference type="InterPro" id="IPR018223">
    <property type="entry name" value="Arginosuc_synth_CS"/>
</dbReference>
<dbReference type="InterPro" id="IPR023434">
    <property type="entry name" value="Arginosuc_synth_type_1_subfam"/>
</dbReference>
<dbReference type="InterPro" id="IPR024074">
    <property type="entry name" value="AS_cat/multimer_dom_body"/>
</dbReference>
<dbReference type="InterPro" id="IPR014729">
    <property type="entry name" value="Rossmann-like_a/b/a_fold"/>
</dbReference>
<dbReference type="NCBIfam" id="TIGR00032">
    <property type="entry name" value="argG"/>
    <property type="match status" value="1"/>
</dbReference>
<dbReference type="NCBIfam" id="NF001770">
    <property type="entry name" value="PRK00509.1"/>
    <property type="match status" value="1"/>
</dbReference>
<dbReference type="PANTHER" id="PTHR11587">
    <property type="entry name" value="ARGININOSUCCINATE SYNTHASE"/>
    <property type="match status" value="1"/>
</dbReference>
<dbReference type="PANTHER" id="PTHR11587:SF2">
    <property type="entry name" value="ARGININOSUCCINATE SYNTHASE"/>
    <property type="match status" value="1"/>
</dbReference>
<dbReference type="Pfam" id="PF20979">
    <property type="entry name" value="Arginosuc_syn_C"/>
    <property type="match status" value="1"/>
</dbReference>
<dbReference type="Pfam" id="PF00764">
    <property type="entry name" value="Arginosuc_synth"/>
    <property type="match status" value="1"/>
</dbReference>
<dbReference type="SUPFAM" id="SSF52402">
    <property type="entry name" value="Adenine nucleotide alpha hydrolases-like"/>
    <property type="match status" value="1"/>
</dbReference>
<dbReference type="SUPFAM" id="SSF69864">
    <property type="entry name" value="Argininosuccinate synthetase, C-terminal domain"/>
    <property type="match status" value="1"/>
</dbReference>
<dbReference type="PROSITE" id="PS00564">
    <property type="entry name" value="ARGININOSUCCIN_SYN_1"/>
    <property type="match status" value="1"/>
</dbReference>
<dbReference type="PROSITE" id="PS00565">
    <property type="entry name" value="ARGININOSUCCIN_SYN_2"/>
    <property type="match status" value="1"/>
</dbReference>
<organism>
    <name type="scientific">Arthrobacter sp. (strain FB24)</name>
    <dbReference type="NCBI Taxonomy" id="290399"/>
    <lineage>
        <taxon>Bacteria</taxon>
        <taxon>Bacillati</taxon>
        <taxon>Actinomycetota</taxon>
        <taxon>Actinomycetes</taxon>
        <taxon>Micrococcales</taxon>
        <taxon>Micrococcaceae</taxon>
        <taxon>Arthrobacter</taxon>
    </lineage>
</organism>
<proteinExistence type="inferred from homology"/>
<evidence type="ECO:0000255" key="1">
    <source>
        <dbReference type="HAMAP-Rule" id="MF_00005"/>
    </source>
</evidence>
<name>ASSY_ARTS2</name>